<name>FRE7_YEAS7</name>
<organism>
    <name type="scientific">Saccharomyces cerevisiae (strain YJM789)</name>
    <name type="common">Baker's yeast</name>
    <dbReference type="NCBI Taxonomy" id="307796"/>
    <lineage>
        <taxon>Eukaryota</taxon>
        <taxon>Fungi</taxon>
        <taxon>Dikarya</taxon>
        <taxon>Ascomycota</taxon>
        <taxon>Saccharomycotina</taxon>
        <taxon>Saccharomycetes</taxon>
        <taxon>Saccharomycetales</taxon>
        <taxon>Saccharomycetaceae</taxon>
        <taxon>Saccharomyces</taxon>
    </lineage>
</organism>
<proteinExistence type="inferred from homology"/>
<reference key="1">
    <citation type="journal article" date="2007" name="Proc. Natl. Acad. Sci. U.S.A.">
        <title>Genome sequencing and comparative analysis of Saccharomyces cerevisiae strain YJM789.</title>
        <authorList>
            <person name="Wei W."/>
            <person name="McCusker J.H."/>
            <person name="Hyman R.W."/>
            <person name="Jones T."/>
            <person name="Ning Y."/>
            <person name="Cao Z."/>
            <person name="Gu Z."/>
            <person name="Bruno D."/>
            <person name="Miranda M."/>
            <person name="Nguyen M."/>
            <person name="Wilhelmy J."/>
            <person name="Komp C."/>
            <person name="Tamse R."/>
            <person name="Wang X."/>
            <person name="Jia P."/>
            <person name="Luedi P."/>
            <person name="Oefner P.J."/>
            <person name="David L."/>
            <person name="Dietrich F.S."/>
            <person name="Li Y."/>
            <person name="Davis R.W."/>
            <person name="Steinmetz L.M."/>
        </authorList>
    </citation>
    <scope>NUCLEOTIDE SEQUENCE [LARGE SCALE GENOMIC DNA]</scope>
    <source>
        <strain>YJM789</strain>
    </source>
</reference>
<dbReference type="EC" id="1.16.1.9"/>
<dbReference type="EMBL" id="AAFW02000030">
    <property type="protein sequence ID" value="EDN63726.1"/>
    <property type="molecule type" value="Genomic_DNA"/>
</dbReference>
<dbReference type="SMR" id="A6ZN61"/>
<dbReference type="HOGENOM" id="CLU_010365_7_2_1"/>
<dbReference type="Proteomes" id="UP000007060">
    <property type="component" value="Unassembled WGS sequence"/>
</dbReference>
<dbReference type="GO" id="GO:0005886">
    <property type="term" value="C:plasma membrane"/>
    <property type="evidence" value="ECO:0007669"/>
    <property type="project" value="UniProtKB-SubCell"/>
</dbReference>
<dbReference type="GO" id="GO:0052851">
    <property type="term" value="F:ferric-chelate reductase (NADPH) activity"/>
    <property type="evidence" value="ECO:0007669"/>
    <property type="project" value="UniProtKB-EC"/>
</dbReference>
<dbReference type="GO" id="GO:0046872">
    <property type="term" value="F:metal ion binding"/>
    <property type="evidence" value="ECO:0007669"/>
    <property type="project" value="UniProtKB-KW"/>
</dbReference>
<dbReference type="GO" id="GO:0015677">
    <property type="term" value="P:copper ion import"/>
    <property type="evidence" value="ECO:0007669"/>
    <property type="project" value="TreeGrafter"/>
</dbReference>
<dbReference type="GO" id="GO:0006879">
    <property type="term" value="P:intracellular iron ion homeostasis"/>
    <property type="evidence" value="ECO:0007669"/>
    <property type="project" value="TreeGrafter"/>
</dbReference>
<dbReference type="GO" id="GO:0006826">
    <property type="term" value="P:iron ion transport"/>
    <property type="evidence" value="ECO:0007669"/>
    <property type="project" value="UniProtKB-KW"/>
</dbReference>
<dbReference type="CDD" id="cd06186">
    <property type="entry name" value="NOX_Duox_like_FAD_NADP"/>
    <property type="match status" value="1"/>
</dbReference>
<dbReference type="FunFam" id="3.40.50.80:FF:000079">
    <property type="entry name" value="Fre7p"/>
    <property type="match status" value="1"/>
</dbReference>
<dbReference type="Gene3D" id="3.40.50.80">
    <property type="entry name" value="Nucleotide-binding domain of ferredoxin-NADP reductase (FNR) module"/>
    <property type="match status" value="1"/>
</dbReference>
<dbReference type="Gene3D" id="2.40.30.10">
    <property type="entry name" value="Translation factors"/>
    <property type="match status" value="1"/>
</dbReference>
<dbReference type="InterPro" id="IPR013112">
    <property type="entry name" value="FAD-bd_8"/>
</dbReference>
<dbReference type="InterPro" id="IPR017927">
    <property type="entry name" value="FAD-bd_FR_type"/>
</dbReference>
<dbReference type="InterPro" id="IPR013130">
    <property type="entry name" value="Fe3_Rdtase_TM_dom"/>
</dbReference>
<dbReference type="InterPro" id="IPR013121">
    <property type="entry name" value="Fe_red_NAD-bd_6"/>
</dbReference>
<dbReference type="InterPro" id="IPR051410">
    <property type="entry name" value="Ferric/Cupric_Reductase"/>
</dbReference>
<dbReference type="InterPro" id="IPR039261">
    <property type="entry name" value="FNR_nucleotide-bd"/>
</dbReference>
<dbReference type="InterPro" id="IPR017938">
    <property type="entry name" value="Riboflavin_synthase-like_b-brl"/>
</dbReference>
<dbReference type="PANTHER" id="PTHR32361:SF23">
    <property type="entry name" value="FERRIC-CHELATE REDUCTASE"/>
    <property type="match status" value="1"/>
</dbReference>
<dbReference type="PANTHER" id="PTHR32361">
    <property type="entry name" value="FERRIC/CUPRIC REDUCTASE TRANSMEMBRANE COMPONENT"/>
    <property type="match status" value="1"/>
</dbReference>
<dbReference type="Pfam" id="PF08022">
    <property type="entry name" value="FAD_binding_8"/>
    <property type="match status" value="1"/>
</dbReference>
<dbReference type="Pfam" id="PF01794">
    <property type="entry name" value="Ferric_reduct"/>
    <property type="match status" value="1"/>
</dbReference>
<dbReference type="Pfam" id="PF08030">
    <property type="entry name" value="NAD_binding_6"/>
    <property type="match status" value="1"/>
</dbReference>
<dbReference type="SFLD" id="SFLDF00464">
    <property type="entry name" value="Ferric/cupric_reductase"/>
    <property type="match status" value="1"/>
</dbReference>
<dbReference type="SFLD" id="SFLDS00052">
    <property type="entry name" value="Ferric_Reductase_Domain"/>
    <property type="match status" value="1"/>
</dbReference>
<dbReference type="SFLD" id="SFLDG01168">
    <property type="entry name" value="Ferric_reductase_subgroup_(FRE"/>
    <property type="match status" value="1"/>
</dbReference>
<dbReference type="SUPFAM" id="SSF52343">
    <property type="entry name" value="Ferredoxin reductase-like, C-terminal NADP-linked domain"/>
    <property type="match status" value="1"/>
</dbReference>
<dbReference type="SUPFAM" id="SSF63380">
    <property type="entry name" value="Riboflavin synthase domain-like"/>
    <property type="match status" value="1"/>
</dbReference>
<dbReference type="PROSITE" id="PS51384">
    <property type="entry name" value="FAD_FR"/>
    <property type="match status" value="1"/>
</dbReference>
<keyword id="KW-1003">Cell membrane</keyword>
<keyword id="KW-0186">Copper</keyword>
<keyword id="KW-0187">Copper transport</keyword>
<keyword id="KW-0249">Electron transport</keyword>
<keyword id="KW-0274">FAD</keyword>
<keyword id="KW-0285">Flavoprotein</keyword>
<keyword id="KW-0349">Heme</keyword>
<keyword id="KW-0406">Ion transport</keyword>
<keyword id="KW-0408">Iron</keyword>
<keyword id="KW-0410">Iron transport</keyword>
<keyword id="KW-0472">Membrane</keyword>
<keyword id="KW-0479">Metal-binding</keyword>
<keyword id="KW-0521">NADP</keyword>
<keyword id="KW-0560">Oxidoreductase</keyword>
<keyword id="KW-0812">Transmembrane</keyword>
<keyword id="KW-1133">Transmembrane helix</keyword>
<keyword id="KW-0813">Transport</keyword>
<sequence length="620" mass="70880">MIEERDLVLSNGIHCIADIHSELYARLKKESQAVTPWVYQKQYGKFVTYFVAVIIFLSLIKKLAFMYYDSSEEFLPEKKNSPTTPSVFLARIMTKLVAFNRYICYRKFPTLIFSYLGIPTSVGTFLVVMATTLYTLLYCFVPHPFYRPCAGFGSPPLSVRAGIMAISLVSFVFSLSGKINVIGWLVGLSYEKINIYHQWASILCLFFSWVHVIPFLRQARHEGGYERMHQRWKASDMWRSGVPPILFLNLLWLSSLPIARRHFYEIFLQLHWILAVGFYISLFYHVYPELNSHMYLVATIVVWFAQLFYRLAVKGYLRPGRSFMASTIANVSIVGEGCVELIVKDVDMAYSPGQHIFVRTIDKDIISNHPFSIFPSAKYPGGIKMLIRAQKGFSKRLYESNDDMKKILIDGPYGGIERDIRSFTNVYLICSGSGISTCLPFLQKYGPILHKTNLEVITLDWVVRHREDISWIRDEICTLSNNLRQLFLDGTIVVRIYVCSDSTVPGIIKTFPQTADTASDQSDLAKREKDTEFGQDDTESNSTFDKSNNEYKGLITIIPSKPDLNQVINDYQIGFRNCFICSGSDSLRYTVGNSVAGLQAKVFSNKNVEECYLHSESFGY</sequence>
<protein>
    <recommendedName>
        <fullName>Ferric/cupric reductase transmembrane component 7</fullName>
        <ecNumber>1.16.1.9</ecNumber>
    </recommendedName>
    <alternativeName>
        <fullName>Ferric-chelate reductase 7</fullName>
    </alternativeName>
</protein>
<feature type="chain" id="PRO_0000337758" description="Ferric/cupric reductase transmembrane component 7">
    <location>
        <begin position="1"/>
        <end position="620"/>
    </location>
</feature>
<feature type="topological domain" description="Extracellular" evidence="1">
    <location>
        <begin position="1"/>
        <end position="45"/>
    </location>
</feature>
<feature type="transmembrane region" description="Helical; Name=1" evidence="2">
    <location>
        <begin position="46"/>
        <end position="66"/>
    </location>
</feature>
<feature type="topological domain" description="Cytoplasmic" evidence="1">
    <location>
        <begin position="67"/>
        <end position="107"/>
    </location>
</feature>
<feature type="transmembrane region" description="Helical; Name=2" evidence="2">
    <location>
        <begin position="108"/>
        <end position="128"/>
    </location>
</feature>
<feature type="topological domain" description="Extracellular" evidence="1">
    <location>
        <begin position="129"/>
        <end position="167"/>
    </location>
</feature>
<feature type="transmembrane region" description="Helical; Name=3" evidence="2">
    <location>
        <begin position="168"/>
        <end position="188"/>
    </location>
</feature>
<feature type="topological domain" description="Cytoplasmic" evidence="1">
    <location>
        <begin position="189"/>
        <end position="194"/>
    </location>
</feature>
<feature type="transmembrane region" description="Helical; Name=4" evidence="2">
    <location>
        <begin position="195"/>
        <end position="215"/>
    </location>
</feature>
<feature type="topological domain" description="Extracellular" evidence="1">
    <location>
        <begin position="216"/>
        <end position="237"/>
    </location>
</feature>
<feature type="transmembrane region" description="Helical; Name=5" evidence="2">
    <location>
        <begin position="238"/>
        <end position="258"/>
    </location>
</feature>
<feature type="topological domain" description="Cytoplasmic" evidence="1">
    <location>
        <begin position="259"/>
        <end position="265"/>
    </location>
</feature>
<feature type="transmembrane region" description="Helical; Name=6" evidence="2">
    <location>
        <begin position="266"/>
        <end position="286"/>
    </location>
</feature>
<feature type="topological domain" description="Extracellular" evidence="1">
    <location>
        <begin position="287"/>
        <end position="292"/>
    </location>
</feature>
<feature type="transmembrane region" description="Helical; Name=7" evidence="2">
    <location>
        <begin position="293"/>
        <end position="313"/>
    </location>
</feature>
<feature type="topological domain" description="Cytoplasmic" evidence="1">
    <location>
        <begin position="314"/>
        <end position="620"/>
    </location>
</feature>
<feature type="domain" description="Ferric oxidoreductase">
    <location>
        <begin position="161"/>
        <end position="320"/>
    </location>
</feature>
<feature type="domain" description="FAD-binding FR-type" evidence="3">
    <location>
        <begin position="321"/>
        <end position="419"/>
    </location>
</feature>
<feature type="region of interest" description="Disordered" evidence="4">
    <location>
        <begin position="519"/>
        <end position="544"/>
    </location>
</feature>
<feature type="compositionally biased region" description="Basic and acidic residues" evidence="4">
    <location>
        <begin position="523"/>
        <end position="532"/>
    </location>
</feature>
<feature type="binding site" description="axial binding residue" evidence="1">
    <location>
        <position position="197"/>
    </location>
    <ligand>
        <name>heme</name>
        <dbReference type="ChEBI" id="CHEBI:30413"/>
        <label>1</label>
    </ligand>
    <ligandPart>
        <name>Fe</name>
        <dbReference type="ChEBI" id="CHEBI:18248"/>
    </ligandPart>
</feature>
<feature type="binding site" description="axial binding residue" evidence="1">
    <location>
        <position position="211"/>
    </location>
    <ligand>
        <name>heme</name>
        <dbReference type="ChEBI" id="CHEBI:30413"/>
        <label>2</label>
    </ligand>
    <ligandPart>
        <name>Fe</name>
        <dbReference type="ChEBI" id="CHEBI:18248"/>
    </ligandPart>
</feature>
<feature type="binding site" description="axial binding residue" evidence="1">
    <location>
        <position position="271"/>
    </location>
    <ligand>
        <name>heme</name>
        <dbReference type="ChEBI" id="CHEBI:30413"/>
        <label>1</label>
    </ligand>
    <ligandPart>
        <name>Fe</name>
        <dbReference type="ChEBI" id="CHEBI:18248"/>
    </ligandPart>
</feature>
<feature type="binding site" description="axial binding residue" evidence="1">
    <location>
        <position position="285"/>
    </location>
    <ligand>
        <name>heme</name>
        <dbReference type="ChEBI" id="CHEBI:30413"/>
        <label>2</label>
    </ligand>
    <ligandPart>
        <name>Fe</name>
        <dbReference type="ChEBI" id="CHEBI:18248"/>
    </ligandPart>
</feature>
<feature type="binding site" evidence="2">
    <location>
        <begin position="369"/>
        <end position="375"/>
    </location>
    <ligand>
        <name>FAD</name>
        <dbReference type="ChEBI" id="CHEBI:57692"/>
    </ligand>
</feature>
<accession>A6ZN61</accession>
<gene>
    <name type="primary">FRE7</name>
    <name type="ORF">SCY_4929</name>
</gene>
<comment type="function">
    <text evidence="1">Cell surface metalloreductase. May be involved in copper homeostasis (By similarity).</text>
</comment>
<comment type="catalytic activity">
    <reaction>
        <text>2 a Fe(II)-siderophore + NADP(+) + H(+) = 2 a Fe(III)-siderophore + NADPH</text>
        <dbReference type="Rhea" id="RHEA:28795"/>
        <dbReference type="Rhea" id="RHEA-COMP:11342"/>
        <dbReference type="Rhea" id="RHEA-COMP:11344"/>
        <dbReference type="ChEBI" id="CHEBI:15378"/>
        <dbReference type="ChEBI" id="CHEBI:29033"/>
        <dbReference type="ChEBI" id="CHEBI:29034"/>
        <dbReference type="ChEBI" id="CHEBI:57783"/>
        <dbReference type="ChEBI" id="CHEBI:58349"/>
        <dbReference type="EC" id="1.16.1.9"/>
    </reaction>
</comment>
<comment type="cofactor">
    <cofactor evidence="5">
        <name>FAD</name>
        <dbReference type="ChEBI" id="CHEBI:57692"/>
    </cofactor>
</comment>
<comment type="subcellular location">
    <subcellularLocation>
        <location evidence="1">Cell membrane</location>
        <topology evidence="1">Multi-pass membrane protein</topology>
    </subcellularLocation>
</comment>
<comment type="induction">
    <text evidence="1">By transcription factor MAC1 upon copper deprivation.</text>
</comment>
<comment type="similarity">
    <text evidence="5">Belongs to the ferric reductase (FRE) family.</text>
</comment>
<evidence type="ECO:0000250" key="1"/>
<evidence type="ECO:0000255" key="2"/>
<evidence type="ECO:0000255" key="3">
    <source>
        <dbReference type="PROSITE-ProRule" id="PRU00716"/>
    </source>
</evidence>
<evidence type="ECO:0000256" key="4">
    <source>
        <dbReference type="SAM" id="MobiDB-lite"/>
    </source>
</evidence>
<evidence type="ECO:0000305" key="5"/>